<comment type="function">
    <text evidence="3">Alpha-conotoxins act on postsynaptic membranes, they bind to the nicotinic acetylcholine receptors (nAChR) and thus inhibit them. Through its two C-terminal domains, this homodimeric protein would bind to two nAChR allosteric sites, located outside the nAChR C-loop of the principal binding face and at the adjacent binding interface in a clockwise direction. This toxin specifically blocks mammalian neuronal nAChR of the alpha-7/CHRNA7, alpha-3-beta-2/CHRNA3-CHRNB2 and alpha-4-beta-2/CHRNA4-CHRNB2 subtypes.</text>
</comment>
<comment type="subunit">
    <text evidence="2 5">Hetero-, homo- or pseudo-homodimer (identical sequence, different post-translational modifications) (By similarity). Heterodimer of [carboxy'Glu-49', hydroxy'Pro-55']Ms20.3 and [carboxyGlu-50, hydroxyPro-56]Ms20.5 may exist.</text>
</comment>
<comment type="subcellular location">
    <subcellularLocation>
        <location>Secreted</location>
    </subcellularLocation>
</comment>
<comment type="tissue specificity">
    <text>Expressed by the venom duct.</text>
</comment>
<comment type="domain">
    <text>The cysteine framework is XX (C-CC-C-CC-C-C-C-C).</text>
</comment>
<comment type="domain">
    <text evidence="3">Displays a mini-granulin fold, a structure composed of two short, stacked beta-hairpins connected by two parallel disulfide bonds. This newly described fold is derived from the same cysteine connectivity as knottins (ICK fold). The name 'mini-granulin fold' comes from the structural homology with the N-terminal region of the human granulin.</text>
</comment>
<comment type="similarity">
    <text evidence="6">Belongs to the conotoxin D superfamily.</text>
</comment>
<name>CXAT5_CONMS</name>
<sequence length="95" mass="10194">MPKLAVVLLVLLILPLSYFDAAGGQAAEGDRRGNGLARYLQRGGRDNEAECQINTPGSSWGKCCLTRMCGPMCCARSGCTCVYHWRRGHGCSCPG</sequence>
<evidence type="ECO:0000250" key="1">
    <source>
        <dbReference type="UniProtKB" id="A0A0A0VBX4"/>
    </source>
</evidence>
<evidence type="ECO:0000250" key="2">
    <source>
        <dbReference type="UniProtKB" id="C3VVN5"/>
    </source>
</evidence>
<evidence type="ECO:0000250" key="3">
    <source>
        <dbReference type="UniProtKB" id="P0C1W6"/>
    </source>
</evidence>
<evidence type="ECO:0000255" key="4"/>
<evidence type="ECO:0000269" key="5">
    <source>
    </source>
</evidence>
<evidence type="ECO:0000305" key="6"/>
<feature type="signal peptide" evidence="4">
    <location>
        <begin position="1"/>
        <end position="24"/>
    </location>
</feature>
<feature type="propeptide" id="PRO_0000391818" evidence="5">
    <location>
        <begin position="25"/>
        <end position="45"/>
    </location>
</feature>
<feature type="chain" id="PRO_0000391819" description="Alpha-conotoxin-like Ms20.5">
    <location>
        <begin position="46"/>
        <end position="95"/>
    </location>
</feature>
<feature type="modified residue" description="4-carboxyglutamate" evidence="5">
    <location>
        <position position="50"/>
    </location>
</feature>
<feature type="modified residue" description="4-hydroxyproline" evidence="5">
    <location>
        <position position="56"/>
    </location>
</feature>
<feature type="disulfide bond" description="Interchain (with C-63)" evidence="1">
    <location>
        <position position="51"/>
    </location>
</feature>
<feature type="disulfide bond" description="Interchain (with C-51)" evidence="1">
    <location>
        <position position="63"/>
    </location>
</feature>
<feature type="disulfide bond" evidence="1">
    <location>
        <begin position="64"/>
        <end position="73"/>
    </location>
</feature>
<feature type="disulfide bond" evidence="1">
    <location>
        <begin position="69"/>
        <end position="81"/>
    </location>
</feature>
<feature type="disulfide bond" evidence="1">
    <location>
        <begin position="74"/>
        <end position="91"/>
    </location>
</feature>
<feature type="disulfide bond" evidence="1">
    <location>
        <begin position="79"/>
        <end position="93"/>
    </location>
</feature>
<protein>
    <recommendedName>
        <fullName>Alpha-conotoxin-like Ms20.5</fullName>
    </recommendedName>
</protein>
<proteinExistence type="evidence at protein level"/>
<reference key="1">
    <citation type="journal article" date="2009" name="Biochemistry">
        <title>Novel alpha D-conopeptides and their precursors identified by cDNA cloning define the D-conotoxin superfamily.</title>
        <authorList>
            <person name="Loughnan M.L."/>
            <person name="Nicke A."/>
            <person name="Lawrence N."/>
            <person name="Lewis R.J."/>
        </authorList>
    </citation>
    <scope>NUCLEOTIDE SEQUENCE [MRNA]</scope>
    <scope>PROTEIN SEQUENCE OF 46-78</scope>
    <scope>GAMMA-CARBOXYGLUTAMATION AT GLU-50</scope>
    <scope>HYDROXYLATION AT PRO-56</scope>
    <scope>SUBUNIT</scope>
    <source>
        <tissue>Venom</tissue>
        <tissue>Venom duct</tissue>
    </source>
</reference>
<keyword id="KW-0008">Acetylcholine receptor inhibiting toxin</keyword>
<keyword id="KW-0903">Direct protein sequencing</keyword>
<keyword id="KW-1015">Disulfide bond</keyword>
<keyword id="KW-0301">Gamma-carboxyglutamic acid</keyword>
<keyword id="KW-0379">Hydroxylation</keyword>
<keyword id="KW-0872">Ion channel impairing toxin</keyword>
<keyword id="KW-0528">Neurotoxin</keyword>
<keyword id="KW-0629">Postsynaptic neurotoxin</keyword>
<keyword id="KW-0964">Secreted</keyword>
<keyword id="KW-0732">Signal</keyword>
<keyword id="KW-0800">Toxin</keyword>
<accession>P0CE30</accession>
<dbReference type="SMR" id="P0CE30"/>
<dbReference type="GO" id="GO:0005576">
    <property type="term" value="C:extracellular region"/>
    <property type="evidence" value="ECO:0007669"/>
    <property type="project" value="UniProtKB-SubCell"/>
</dbReference>
<dbReference type="GO" id="GO:0035792">
    <property type="term" value="C:host cell postsynaptic membrane"/>
    <property type="evidence" value="ECO:0007669"/>
    <property type="project" value="UniProtKB-KW"/>
</dbReference>
<dbReference type="GO" id="GO:0030550">
    <property type="term" value="F:acetylcholine receptor inhibitor activity"/>
    <property type="evidence" value="ECO:0007669"/>
    <property type="project" value="UniProtKB-KW"/>
</dbReference>
<dbReference type="GO" id="GO:0099106">
    <property type="term" value="F:ion channel regulator activity"/>
    <property type="evidence" value="ECO:0007669"/>
    <property type="project" value="UniProtKB-KW"/>
</dbReference>
<dbReference type="GO" id="GO:0090729">
    <property type="term" value="F:toxin activity"/>
    <property type="evidence" value="ECO:0007669"/>
    <property type="project" value="UniProtKB-KW"/>
</dbReference>
<organism>
    <name type="scientific">Conus mustelinus</name>
    <name type="common">Weasel cone</name>
    <dbReference type="NCBI Taxonomy" id="101309"/>
    <lineage>
        <taxon>Eukaryota</taxon>
        <taxon>Metazoa</taxon>
        <taxon>Spiralia</taxon>
        <taxon>Lophotrochozoa</taxon>
        <taxon>Mollusca</taxon>
        <taxon>Gastropoda</taxon>
        <taxon>Caenogastropoda</taxon>
        <taxon>Neogastropoda</taxon>
        <taxon>Conoidea</taxon>
        <taxon>Conidae</taxon>
        <taxon>Conus</taxon>
        <taxon>Rhizoconus</taxon>
    </lineage>
</organism>